<proteinExistence type="inferred from homology"/>
<protein>
    <recommendedName>
        <fullName>Dihydromonapterin reductase</fullName>
        <shortName>H(2)-MPt reductase</shortName>
        <ecNumber evidence="1">1.5.1.50</ecNumber>
    </recommendedName>
    <alternativeName>
        <fullName>Dihydrofolate reductase</fullName>
        <shortName>DHFR</shortName>
        <ecNumber evidence="1">1.5.1.3</ecNumber>
    </alternativeName>
</protein>
<evidence type="ECO:0000250" key="1">
    <source>
        <dbReference type="UniProtKB" id="P0AFS3"/>
    </source>
</evidence>
<evidence type="ECO:0000255" key="2">
    <source>
        <dbReference type="PROSITE-ProRule" id="PRU10001"/>
    </source>
</evidence>
<evidence type="ECO:0000305" key="3"/>
<dbReference type="EC" id="1.5.1.50" evidence="1"/>
<dbReference type="EC" id="1.5.1.3" evidence="1"/>
<dbReference type="EMBL" id="CP000970">
    <property type="protein sequence ID" value="ACB19658.1"/>
    <property type="molecule type" value="Genomic_DNA"/>
</dbReference>
<dbReference type="RefSeq" id="WP_000513659.1">
    <property type="nucleotide sequence ID" value="NC_010498.1"/>
</dbReference>
<dbReference type="SMR" id="B1LET0"/>
<dbReference type="KEGG" id="ecm:EcSMS35_1592"/>
<dbReference type="HOGENOM" id="CLU_010194_1_3_6"/>
<dbReference type="Proteomes" id="UP000007011">
    <property type="component" value="Chromosome"/>
</dbReference>
<dbReference type="GO" id="GO:0004146">
    <property type="term" value="F:dihydrofolate reductase activity"/>
    <property type="evidence" value="ECO:0007669"/>
    <property type="project" value="UniProtKB-EC"/>
</dbReference>
<dbReference type="GO" id="GO:0006730">
    <property type="term" value="P:one-carbon metabolic process"/>
    <property type="evidence" value="ECO:0007669"/>
    <property type="project" value="UniProtKB-KW"/>
</dbReference>
<dbReference type="CDD" id="cd05357">
    <property type="entry name" value="PR_SDR_c"/>
    <property type="match status" value="1"/>
</dbReference>
<dbReference type="FunFam" id="3.40.50.720:FF:000225">
    <property type="entry name" value="Dihydrofolate reductase FolM"/>
    <property type="match status" value="1"/>
</dbReference>
<dbReference type="Gene3D" id="3.40.50.720">
    <property type="entry name" value="NAD(P)-binding Rossmann-like Domain"/>
    <property type="match status" value="1"/>
</dbReference>
<dbReference type="InterPro" id="IPR036291">
    <property type="entry name" value="NAD(P)-bd_dom_sf"/>
</dbReference>
<dbReference type="InterPro" id="IPR020904">
    <property type="entry name" value="Sc_DH/Rdtase_CS"/>
</dbReference>
<dbReference type="InterPro" id="IPR002347">
    <property type="entry name" value="SDR_fam"/>
</dbReference>
<dbReference type="NCBIfam" id="NF005066">
    <property type="entry name" value="PRK06483.1"/>
    <property type="match status" value="1"/>
</dbReference>
<dbReference type="PANTHER" id="PTHR43639:SF6">
    <property type="entry name" value="DIHYDROMONAPTERIN REDUCTASE"/>
    <property type="match status" value="1"/>
</dbReference>
<dbReference type="PANTHER" id="PTHR43639">
    <property type="entry name" value="OXIDOREDUCTASE, SHORT-CHAIN DEHYDROGENASE/REDUCTASE FAMILY (AFU_ORTHOLOGUE AFUA_5G02870)"/>
    <property type="match status" value="1"/>
</dbReference>
<dbReference type="Pfam" id="PF13561">
    <property type="entry name" value="adh_short_C2"/>
    <property type="match status" value="1"/>
</dbReference>
<dbReference type="PRINTS" id="PR00081">
    <property type="entry name" value="GDHRDH"/>
</dbReference>
<dbReference type="SUPFAM" id="SSF51735">
    <property type="entry name" value="NAD(P)-binding Rossmann-fold domains"/>
    <property type="match status" value="1"/>
</dbReference>
<dbReference type="PROSITE" id="PS00061">
    <property type="entry name" value="ADH_SHORT"/>
    <property type="match status" value="1"/>
</dbReference>
<reference key="1">
    <citation type="journal article" date="2008" name="J. Bacteriol.">
        <title>Insights into the environmental resistance gene pool from the genome sequence of the multidrug-resistant environmental isolate Escherichia coli SMS-3-5.</title>
        <authorList>
            <person name="Fricke W.F."/>
            <person name="Wright M.S."/>
            <person name="Lindell A.H."/>
            <person name="Harkins D.M."/>
            <person name="Baker-Austin C."/>
            <person name="Ravel J."/>
            <person name="Stepanauskas R."/>
        </authorList>
    </citation>
    <scope>NUCLEOTIDE SEQUENCE [LARGE SCALE GENOMIC DNA]</scope>
    <source>
        <strain>SMS-3-5 / SECEC</strain>
    </source>
</reference>
<comment type="function">
    <text evidence="1">Catalyzes the reduction of dihydromonapterin to tetrahydromonapterin. Also has lower activity with dihydrofolate.</text>
</comment>
<comment type="catalytic activity">
    <reaction evidence="1">
        <text>(6S)-5,6,7,8-tetrahydrofolate + NADP(+) = 7,8-dihydrofolate + NADPH + H(+)</text>
        <dbReference type="Rhea" id="RHEA:15009"/>
        <dbReference type="ChEBI" id="CHEBI:15378"/>
        <dbReference type="ChEBI" id="CHEBI:57451"/>
        <dbReference type="ChEBI" id="CHEBI:57453"/>
        <dbReference type="ChEBI" id="CHEBI:57783"/>
        <dbReference type="ChEBI" id="CHEBI:58349"/>
        <dbReference type="EC" id="1.5.1.3"/>
    </reaction>
</comment>
<comment type="catalytic activity">
    <reaction evidence="1">
        <text>7,8-dihydromonapterin + NADPH + H(+) = 5,6,7,8-tetrahydromonapterin + NADP(+)</text>
        <dbReference type="Rhea" id="RHEA:34847"/>
        <dbReference type="ChEBI" id="CHEBI:15378"/>
        <dbReference type="ChEBI" id="CHEBI:57783"/>
        <dbReference type="ChEBI" id="CHEBI:58349"/>
        <dbReference type="ChEBI" id="CHEBI:71175"/>
        <dbReference type="ChEBI" id="CHEBI:71177"/>
        <dbReference type="EC" id="1.5.1.50"/>
    </reaction>
</comment>
<comment type="similarity">
    <text evidence="3">Belongs to the short-chain dehydrogenases/reductases (SDR) family. FolM subfamily.</text>
</comment>
<organism>
    <name type="scientific">Escherichia coli (strain SMS-3-5 / SECEC)</name>
    <dbReference type="NCBI Taxonomy" id="439855"/>
    <lineage>
        <taxon>Bacteria</taxon>
        <taxon>Pseudomonadati</taxon>
        <taxon>Pseudomonadota</taxon>
        <taxon>Gammaproteobacteria</taxon>
        <taxon>Enterobacterales</taxon>
        <taxon>Enterobacteriaceae</taxon>
        <taxon>Escherichia</taxon>
    </lineage>
</organism>
<feature type="chain" id="PRO_0000339391" description="Dihydromonapterin reductase">
    <location>
        <begin position="1"/>
        <end position="240"/>
    </location>
</feature>
<feature type="active site" description="Proton acceptor" evidence="2">
    <location>
        <position position="152"/>
    </location>
</feature>
<gene>
    <name type="primary">folM</name>
    <name type="ordered locus">EcSMS35_1592</name>
</gene>
<name>FOLM_ECOSM</name>
<accession>B1LET0</accession>
<sequence length="240" mass="26382">MGKAQPLPILITGGGRRIGLALAWHFINQKQPVIISYRTHYPAIDGLINAGAQCIQADFSTNDGVMAFADEVLKSTHGLRAILHNASAWMAEKPGTSLTDVLACMMQIHVNTPYLLNHALERLLRGHGHAASDIIHFTDYVVERGSDKHIAYAASKAALDNMTRSFARKLAPEVKVNSIAPSLILFNEHDDAEYRQQALNKSLMKTAPGEKEVIDLVDYLLTSCFVTGRSFPLDGGRHLR</sequence>
<keyword id="KW-0521">NADP</keyword>
<keyword id="KW-0554">One-carbon metabolism</keyword>
<keyword id="KW-0560">Oxidoreductase</keyword>